<evidence type="ECO:0000250" key="1"/>
<evidence type="ECO:0000255" key="2"/>
<evidence type="ECO:0000256" key="3">
    <source>
        <dbReference type="SAM" id="MobiDB-lite"/>
    </source>
</evidence>
<evidence type="ECO:0000305" key="4"/>
<comment type="function">
    <text evidence="1">Water channel required to facilitate the transport of water across membranes. Involved in freeze tolerance, osmotolerance and cell flocculation in liquid cultures. Is non-functional in most laboratory strains (By similarity).</text>
</comment>
<comment type="subcellular location">
    <subcellularLocation>
        <location evidence="1">Endoplasmic reticulum membrane</location>
        <topology>Multi-pass membrane protein</topology>
    </subcellularLocation>
    <subcellularLocation>
        <location evidence="1">Cell membrane</location>
        <topology>Multi-pass membrane protein</topology>
    </subcellularLocation>
</comment>
<comment type="induction">
    <text evidence="1">During exponential phase in rich medium and repressed in minimum medium, hyper-osmolar medium or in sporulating conditions.</text>
</comment>
<comment type="domain">
    <text>Aquaporins contain two tandem repeats each containing three membrane-spanning domains and a pore-forming loop with the signature motif Asn-Pro-Ala (NPA).</text>
</comment>
<comment type="similarity">
    <text evidence="4">Belongs to the MIP/aquaporin (TC 1.A.8) family.</text>
</comment>
<comment type="caution">
    <text evidence="4">This is a truncated version of aquaporin-2. A natural 11 bp deletion in position 109 leads to a frameshift, which disrupts the gene coding for this protein and produces two ORFs SCY_3532 and SCY_3531. A contiguous sequence for aquaporin-2 can be found in strain Sigma 1278B (AC P0CD89).</text>
</comment>
<sequence>MSNESNDLEKNISHLDPTGVDNAYIPPEQPETKHSRFNIDRDTLRNHFIAAVGEFCGTFMFLWCAYVICNVANHDVALTTEPEGSHPGQLIMIALGFGFSVMFSIWCFWWGFEPSRFSLFVFGQSHLTSQMCSDVVSSDHCWDGCWWCR</sequence>
<reference key="1">
    <citation type="journal article" date="2007" name="Proc. Natl. Acad. Sci. U.S.A.">
        <title>Genome sequencing and comparative analysis of Saccharomyces cerevisiae strain YJM789.</title>
        <authorList>
            <person name="Wei W."/>
            <person name="McCusker J.H."/>
            <person name="Hyman R.W."/>
            <person name="Jones T."/>
            <person name="Ning Y."/>
            <person name="Cao Z."/>
            <person name="Gu Z."/>
            <person name="Bruno D."/>
            <person name="Miranda M."/>
            <person name="Nguyen M."/>
            <person name="Wilhelmy J."/>
            <person name="Komp C."/>
            <person name="Tamse R."/>
            <person name="Wang X."/>
            <person name="Jia P."/>
            <person name="Luedi P."/>
            <person name="Oefner P.J."/>
            <person name="David L."/>
            <person name="Dietrich F.S."/>
            <person name="Li Y."/>
            <person name="Davis R.W."/>
            <person name="Steinmetz L.M."/>
        </authorList>
    </citation>
    <scope>NUCLEOTIDE SEQUENCE [LARGE SCALE GENOMIC DNA]</scope>
    <source>
        <strain>YJM789</strain>
    </source>
</reference>
<protein>
    <recommendedName>
        <fullName>Aquaporin-like protein 2</fullName>
    </recommendedName>
    <alternativeName>
        <fullName>Truncated aquaporin-2</fullName>
    </alternativeName>
</protein>
<dbReference type="EMBL" id="AAFW02000167">
    <property type="protein sequence ID" value="EDN59499.1"/>
    <property type="molecule type" value="Genomic_DNA"/>
</dbReference>
<dbReference type="SMR" id="A7A0K8"/>
<dbReference type="HOGENOM" id="CLU_1750738_0_0_1"/>
<dbReference type="Proteomes" id="UP000007060">
    <property type="component" value="Unassembled WGS sequence"/>
</dbReference>
<dbReference type="GO" id="GO:0005789">
    <property type="term" value="C:endoplasmic reticulum membrane"/>
    <property type="evidence" value="ECO:0007669"/>
    <property type="project" value="UniProtKB-SubCell"/>
</dbReference>
<dbReference type="GO" id="GO:0005886">
    <property type="term" value="C:plasma membrane"/>
    <property type="evidence" value="ECO:0007669"/>
    <property type="project" value="UniProtKB-SubCell"/>
</dbReference>
<dbReference type="FunFam" id="1.20.1080.10:FF:000049">
    <property type="entry name" value="Aquaporin-like protein 2"/>
    <property type="match status" value="1"/>
</dbReference>
<dbReference type="Gene3D" id="1.20.1080.10">
    <property type="entry name" value="Glycerol uptake facilitator protein"/>
    <property type="match status" value="1"/>
</dbReference>
<dbReference type="InterPro" id="IPR023271">
    <property type="entry name" value="Aquaporin-like"/>
</dbReference>
<dbReference type="SUPFAM" id="SSF81338">
    <property type="entry name" value="Aquaporin-like"/>
    <property type="match status" value="1"/>
</dbReference>
<gene>
    <name type="primary">AQY2-2</name>
    <name type="ORF">SCY_3532</name>
</gene>
<proteinExistence type="inferred from homology"/>
<organism>
    <name type="scientific">Saccharomyces cerevisiae (strain YJM789)</name>
    <name type="common">Baker's yeast</name>
    <dbReference type="NCBI Taxonomy" id="307796"/>
    <lineage>
        <taxon>Eukaryota</taxon>
        <taxon>Fungi</taxon>
        <taxon>Dikarya</taxon>
        <taxon>Ascomycota</taxon>
        <taxon>Saccharomycotina</taxon>
        <taxon>Saccharomycetes</taxon>
        <taxon>Saccharomycetales</taxon>
        <taxon>Saccharomycetaceae</taxon>
        <taxon>Saccharomyces</taxon>
    </lineage>
</organism>
<accession>A7A0K8</accession>
<name>AQY22_YEAS7</name>
<keyword id="KW-1003">Cell membrane</keyword>
<keyword id="KW-0256">Endoplasmic reticulum</keyword>
<keyword id="KW-0472">Membrane</keyword>
<keyword id="KW-0677">Repeat</keyword>
<keyword id="KW-0812">Transmembrane</keyword>
<keyword id="KW-1133">Transmembrane helix</keyword>
<keyword id="KW-0813">Transport</keyword>
<feature type="chain" id="PRO_0000391654" description="Aquaporin-like protein 2">
    <location>
        <begin position="1"/>
        <end position="149"/>
    </location>
</feature>
<feature type="topological domain" description="Cytoplasmic" evidence="1">
    <location>
        <begin position="1"/>
        <end position="47"/>
    </location>
</feature>
<feature type="transmembrane region" description="Helical" evidence="2">
    <location>
        <begin position="48"/>
        <end position="68"/>
    </location>
</feature>
<feature type="topological domain" description="Extracellular" evidence="1">
    <location>
        <begin position="69"/>
        <end position="89"/>
    </location>
</feature>
<feature type="transmembrane region" description="Helical" evidence="2">
    <location>
        <begin position="90"/>
        <end position="110"/>
    </location>
</feature>
<feature type="topological domain" description="Cytoplasmic" evidence="1">
    <location>
        <begin position="111"/>
        <end position="149"/>
    </location>
</feature>
<feature type="region of interest" description="Disordered" evidence="3">
    <location>
        <begin position="1"/>
        <end position="35"/>
    </location>
</feature>